<feature type="chain" id="PRO_0000179146" description="Phosphate acetyltransferase">
    <location>
        <begin position="1"/>
        <end position="329"/>
    </location>
</feature>
<comment type="catalytic activity">
    <reaction>
        <text>acetyl-CoA + phosphate = acetyl phosphate + CoA</text>
        <dbReference type="Rhea" id="RHEA:19521"/>
        <dbReference type="ChEBI" id="CHEBI:22191"/>
        <dbReference type="ChEBI" id="CHEBI:43474"/>
        <dbReference type="ChEBI" id="CHEBI:57287"/>
        <dbReference type="ChEBI" id="CHEBI:57288"/>
        <dbReference type="EC" id="2.3.1.8"/>
    </reaction>
</comment>
<comment type="pathway">
    <text>Metabolic intermediate biosynthesis; acetyl-CoA biosynthesis; acetyl-CoA from acetate: step 2/2.</text>
</comment>
<comment type="subcellular location">
    <subcellularLocation>
        <location evidence="1">Cytoplasm</location>
    </subcellularLocation>
</comment>
<comment type="similarity">
    <text evidence="1">Belongs to the phosphate acetyltransferase and butyryltransferase family.</text>
</comment>
<name>PTAS_STAES</name>
<protein>
    <recommendedName>
        <fullName>Phosphate acetyltransferase</fullName>
        <ecNumber>2.3.1.8</ecNumber>
    </recommendedName>
    <alternativeName>
        <fullName>Phosphotransacetylase</fullName>
    </alternativeName>
</protein>
<sequence>MADLLSVLQDKLSGKNVKIVLPEGEDERVLIAATQLQKTDYVSPIVLGNEDNIKSLASKHALDLTQIEIIDPATSELKDELVDAFVERRKGKATKEQAVELLDNVNYFGTMLVYTGKAEGLVSGAAHSTGDTVRPALQIIKTKPGVSRTSGIFFMIKGDEQYIFGDCAINPELDAQGLAEIAVESAKSAQSFGMDPKVAMLSFSTKGSAKSDDVTKVQEALKLAQEKAEADQLDHVVIDGEFQFDAAIVPSVAEKKAPGAKIQGDANVFVFPSLEAGNIGYKIAQRLGGYDAVGPVLQGLNSPVNDLSRGCSTEDVYNLSIITAAQALQ</sequence>
<reference key="1">
    <citation type="journal article" date="2003" name="Mol. Microbiol.">
        <title>Genome-based analysis of virulence genes in a non-biofilm-forming Staphylococcus epidermidis strain (ATCC 12228).</title>
        <authorList>
            <person name="Zhang Y.-Q."/>
            <person name="Ren S.-X."/>
            <person name="Li H.-L."/>
            <person name="Wang Y.-X."/>
            <person name="Fu G."/>
            <person name="Yang J."/>
            <person name="Qin Z.-Q."/>
            <person name="Miao Y.-G."/>
            <person name="Wang W.-Y."/>
            <person name="Chen R.-S."/>
            <person name="Shen Y."/>
            <person name="Chen Z."/>
            <person name="Yuan Z.-H."/>
            <person name="Zhao G.-P."/>
            <person name="Qu D."/>
            <person name="Danchin A."/>
            <person name="Wen Y.-M."/>
        </authorList>
    </citation>
    <scope>NUCLEOTIDE SEQUENCE [LARGE SCALE GENOMIC DNA]</scope>
    <source>
        <strain>ATCC 12228 / FDA PCI 1200</strain>
    </source>
</reference>
<gene>
    <name type="primary">pta</name>
    <name type="ordered locus">SE_0359</name>
</gene>
<evidence type="ECO:0000305" key="1"/>
<keyword id="KW-0012">Acyltransferase</keyword>
<keyword id="KW-0963">Cytoplasm</keyword>
<keyword id="KW-0808">Transferase</keyword>
<proteinExistence type="inferred from homology"/>
<accession>Q8CQ62</accession>
<dbReference type="EC" id="2.3.1.8"/>
<dbReference type="EMBL" id="AE015929">
    <property type="protein sequence ID" value="AAO03956.1"/>
    <property type="molecule type" value="Genomic_DNA"/>
</dbReference>
<dbReference type="RefSeq" id="NP_763914.1">
    <property type="nucleotide sequence ID" value="NC_004461.1"/>
</dbReference>
<dbReference type="RefSeq" id="WP_001832032.1">
    <property type="nucleotide sequence ID" value="NZ_WBME01000026.1"/>
</dbReference>
<dbReference type="SMR" id="Q8CQ62"/>
<dbReference type="GeneID" id="50019479"/>
<dbReference type="KEGG" id="sep:SE_0359"/>
<dbReference type="PATRIC" id="fig|176280.10.peg.334"/>
<dbReference type="eggNOG" id="COG0280">
    <property type="taxonomic scope" value="Bacteria"/>
</dbReference>
<dbReference type="HOGENOM" id="CLU_019723_0_1_9"/>
<dbReference type="OrthoDB" id="9805787at2"/>
<dbReference type="UniPathway" id="UPA00340">
    <property type="reaction ID" value="UER00459"/>
</dbReference>
<dbReference type="Proteomes" id="UP000001411">
    <property type="component" value="Chromosome"/>
</dbReference>
<dbReference type="GO" id="GO:0005737">
    <property type="term" value="C:cytoplasm"/>
    <property type="evidence" value="ECO:0007669"/>
    <property type="project" value="UniProtKB-SubCell"/>
</dbReference>
<dbReference type="GO" id="GO:0008959">
    <property type="term" value="F:phosphate acetyltransferase activity"/>
    <property type="evidence" value="ECO:0007669"/>
    <property type="project" value="UniProtKB-EC"/>
</dbReference>
<dbReference type="GO" id="GO:0006085">
    <property type="term" value="P:acetyl-CoA biosynthetic process"/>
    <property type="evidence" value="ECO:0007669"/>
    <property type="project" value="UniProtKB-UniPathway"/>
</dbReference>
<dbReference type="Gene3D" id="3.40.50.10950">
    <property type="match status" value="1"/>
</dbReference>
<dbReference type="Gene3D" id="3.40.50.10750">
    <property type="entry name" value="Isocitrate/Isopropylmalate dehydrogenase-like"/>
    <property type="match status" value="1"/>
</dbReference>
<dbReference type="InterPro" id="IPR012147">
    <property type="entry name" value="P_Ac_Bu_trans"/>
</dbReference>
<dbReference type="InterPro" id="IPR004614">
    <property type="entry name" value="P_AcTrfase"/>
</dbReference>
<dbReference type="InterPro" id="IPR042113">
    <property type="entry name" value="P_AcTrfase_dom1"/>
</dbReference>
<dbReference type="InterPro" id="IPR042112">
    <property type="entry name" value="P_AcTrfase_dom2"/>
</dbReference>
<dbReference type="InterPro" id="IPR050500">
    <property type="entry name" value="Phos_Acetyltrans/Butyryltrans"/>
</dbReference>
<dbReference type="InterPro" id="IPR002505">
    <property type="entry name" value="PTA_PTB"/>
</dbReference>
<dbReference type="NCBIfam" id="NF007233">
    <property type="entry name" value="PRK09653.1"/>
    <property type="match status" value="1"/>
</dbReference>
<dbReference type="NCBIfam" id="TIGR00651">
    <property type="entry name" value="pta"/>
    <property type="match status" value="1"/>
</dbReference>
<dbReference type="PANTHER" id="PTHR43356">
    <property type="entry name" value="PHOSPHATE ACETYLTRANSFERASE"/>
    <property type="match status" value="1"/>
</dbReference>
<dbReference type="PANTHER" id="PTHR43356:SF3">
    <property type="entry name" value="PHOSPHATE ACETYLTRANSFERASE"/>
    <property type="match status" value="1"/>
</dbReference>
<dbReference type="Pfam" id="PF01515">
    <property type="entry name" value="PTA_PTB"/>
    <property type="match status" value="1"/>
</dbReference>
<dbReference type="PIRSF" id="PIRSF000428">
    <property type="entry name" value="P_Ac_trans"/>
    <property type="match status" value="1"/>
</dbReference>
<dbReference type="SUPFAM" id="SSF53659">
    <property type="entry name" value="Isocitrate/Isopropylmalate dehydrogenase-like"/>
    <property type="match status" value="1"/>
</dbReference>
<organism>
    <name type="scientific">Staphylococcus epidermidis (strain ATCC 12228 / FDA PCI 1200)</name>
    <dbReference type="NCBI Taxonomy" id="176280"/>
    <lineage>
        <taxon>Bacteria</taxon>
        <taxon>Bacillati</taxon>
        <taxon>Bacillota</taxon>
        <taxon>Bacilli</taxon>
        <taxon>Bacillales</taxon>
        <taxon>Staphylococcaceae</taxon>
        <taxon>Staphylococcus</taxon>
    </lineage>
</organism>